<keyword id="KW-0966">Cell projection</keyword>
<keyword id="KW-0969">Cilium</keyword>
<keyword id="KW-0963">Cytoplasm</keyword>
<keyword id="KW-0206">Cytoskeleton</keyword>
<keyword id="KW-0243">Dynein</keyword>
<keyword id="KW-0493">Microtubule</keyword>
<keyword id="KW-0505">Motor protein</keyword>
<keyword id="KW-0597">Phosphoprotein</keyword>
<keyword id="KW-1185">Reference proteome</keyword>
<keyword id="KW-0677">Repeat</keyword>
<keyword id="KW-0853">WD repeat</keyword>
<proteinExistence type="evidence at protein level"/>
<gene>
    <name type="primary">Dnai1</name>
</gene>
<dbReference type="EMBL" id="BC083662">
    <property type="protein sequence ID" value="AAH83662.1"/>
    <property type="molecule type" value="mRNA"/>
</dbReference>
<dbReference type="RefSeq" id="NP_001019513.1">
    <property type="nucleotide sequence ID" value="NM_001024342.1"/>
</dbReference>
<dbReference type="SMR" id="Q5XIL8"/>
<dbReference type="FunCoup" id="Q5XIL8">
    <property type="interactions" value="161"/>
</dbReference>
<dbReference type="STRING" id="10116.ENSRNOP00000059516"/>
<dbReference type="iPTMnet" id="Q5XIL8"/>
<dbReference type="PhosphoSitePlus" id="Q5XIL8"/>
<dbReference type="PaxDb" id="10116-ENSRNOP00000059516"/>
<dbReference type="Ensembl" id="ENSRNOT00000067657.3">
    <property type="protein sequence ID" value="ENSRNOP00000059516.1"/>
    <property type="gene ID" value="ENSRNOG00000013734.7"/>
</dbReference>
<dbReference type="GeneID" id="500442"/>
<dbReference type="KEGG" id="rno:500442"/>
<dbReference type="UCSC" id="RGD:1565671">
    <property type="organism name" value="rat"/>
</dbReference>
<dbReference type="AGR" id="RGD:1565671"/>
<dbReference type="CTD" id="27019"/>
<dbReference type="RGD" id="1565671">
    <property type="gene designation" value="Dnai1"/>
</dbReference>
<dbReference type="eggNOG" id="KOG1587">
    <property type="taxonomic scope" value="Eukaryota"/>
</dbReference>
<dbReference type="GeneTree" id="ENSGT00940000156436"/>
<dbReference type="HOGENOM" id="CLU_015820_2_0_1"/>
<dbReference type="InParanoid" id="Q5XIL8"/>
<dbReference type="OMA" id="VWEDMRA"/>
<dbReference type="OrthoDB" id="10261376at2759"/>
<dbReference type="PhylomeDB" id="Q5XIL8"/>
<dbReference type="TreeFam" id="TF300553"/>
<dbReference type="PRO" id="PR:Q5XIL8"/>
<dbReference type="Proteomes" id="UP000002494">
    <property type="component" value="Chromosome 5"/>
</dbReference>
<dbReference type="Bgee" id="ENSRNOG00000013734">
    <property type="expression patterns" value="Expressed in testis and 4 other cell types or tissues"/>
</dbReference>
<dbReference type="GO" id="GO:0097729">
    <property type="term" value="C:9+2 motile cilium"/>
    <property type="evidence" value="ECO:0000266"/>
    <property type="project" value="RGD"/>
</dbReference>
<dbReference type="GO" id="GO:0005813">
    <property type="term" value="C:centrosome"/>
    <property type="evidence" value="ECO:0000266"/>
    <property type="project" value="RGD"/>
</dbReference>
<dbReference type="GO" id="GO:0005929">
    <property type="term" value="C:cilium"/>
    <property type="evidence" value="ECO:0000266"/>
    <property type="project" value="RGD"/>
</dbReference>
<dbReference type="GO" id="GO:0005737">
    <property type="term" value="C:cytoplasm"/>
    <property type="evidence" value="ECO:0000266"/>
    <property type="project" value="RGD"/>
</dbReference>
<dbReference type="GO" id="GO:0005576">
    <property type="term" value="C:extracellular region"/>
    <property type="evidence" value="ECO:0007669"/>
    <property type="project" value="GOC"/>
</dbReference>
<dbReference type="GO" id="GO:0097386">
    <property type="term" value="C:glial cell projection"/>
    <property type="evidence" value="ECO:0000266"/>
    <property type="project" value="RGD"/>
</dbReference>
<dbReference type="GO" id="GO:0005874">
    <property type="term" value="C:microtubule"/>
    <property type="evidence" value="ECO:0007669"/>
    <property type="project" value="UniProtKB-KW"/>
</dbReference>
<dbReference type="GO" id="GO:0036157">
    <property type="term" value="C:outer dynein arm"/>
    <property type="evidence" value="ECO:0000266"/>
    <property type="project" value="RGD"/>
</dbReference>
<dbReference type="GO" id="GO:0045504">
    <property type="term" value="F:dynein heavy chain binding"/>
    <property type="evidence" value="ECO:0000318"/>
    <property type="project" value="GO_Central"/>
</dbReference>
<dbReference type="GO" id="GO:0045503">
    <property type="term" value="F:dynein light chain binding"/>
    <property type="evidence" value="ECO:0000318"/>
    <property type="project" value="GO_Central"/>
</dbReference>
<dbReference type="GO" id="GO:0003341">
    <property type="term" value="P:cilium movement"/>
    <property type="evidence" value="ECO:0000266"/>
    <property type="project" value="RGD"/>
</dbReference>
<dbReference type="GO" id="GO:0007368">
    <property type="term" value="P:determination of left/right symmetry"/>
    <property type="evidence" value="ECO:0000266"/>
    <property type="project" value="RGD"/>
</dbReference>
<dbReference type="GO" id="GO:0003351">
    <property type="term" value="P:epithelial cilium movement involved in extracellular fluid movement"/>
    <property type="evidence" value="ECO:0000266"/>
    <property type="project" value="RGD"/>
</dbReference>
<dbReference type="GO" id="GO:0030317">
    <property type="term" value="P:flagellated sperm motility"/>
    <property type="evidence" value="ECO:0000266"/>
    <property type="project" value="RGD"/>
</dbReference>
<dbReference type="GO" id="GO:0007507">
    <property type="term" value="P:heart development"/>
    <property type="evidence" value="ECO:0000266"/>
    <property type="project" value="RGD"/>
</dbReference>
<dbReference type="GO" id="GO:0008286">
    <property type="term" value="P:insulin receptor signaling pathway"/>
    <property type="evidence" value="ECO:0000266"/>
    <property type="project" value="RGD"/>
</dbReference>
<dbReference type="GO" id="GO:0036158">
    <property type="term" value="P:outer dynein arm assembly"/>
    <property type="evidence" value="ECO:0000266"/>
    <property type="project" value="RGD"/>
</dbReference>
<dbReference type="FunFam" id="2.130.10.10:FF:000251">
    <property type="entry name" value="Dynein axonemal intermediate chain 1"/>
    <property type="match status" value="1"/>
</dbReference>
<dbReference type="FunFam" id="2.130.10.10:FF:000349">
    <property type="entry name" value="Dynein axonemal intermediate chain 1"/>
    <property type="match status" value="1"/>
</dbReference>
<dbReference type="Gene3D" id="2.130.10.10">
    <property type="entry name" value="YVTN repeat-like/Quinoprotein amine dehydrogenase"/>
    <property type="match status" value="2"/>
</dbReference>
<dbReference type="InterPro" id="IPR050687">
    <property type="entry name" value="Dynein_IC"/>
</dbReference>
<dbReference type="InterPro" id="IPR015943">
    <property type="entry name" value="WD40/YVTN_repeat-like_dom_sf"/>
</dbReference>
<dbReference type="InterPro" id="IPR036322">
    <property type="entry name" value="WD40_repeat_dom_sf"/>
</dbReference>
<dbReference type="InterPro" id="IPR001680">
    <property type="entry name" value="WD40_rpt"/>
</dbReference>
<dbReference type="PANTHER" id="PTHR12442:SF11">
    <property type="entry name" value="DYNEIN AXONEMAL INTERMEDIATE CHAIN 1"/>
    <property type="match status" value="1"/>
</dbReference>
<dbReference type="PANTHER" id="PTHR12442">
    <property type="entry name" value="DYNEIN INTERMEDIATE CHAIN"/>
    <property type="match status" value="1"/>
</dbReference>
<dbReference type="Pfam" id="PF00400">
    <property type="entry name" value="WD40"/>
    <property type="match status" value="2"/>
</dbReference>
<dbReference type="SMART" id="SM00320">
    <property type="entry name" value="WD40"/>
    <property type="match status" value="5"/>
</dbReference>
<dbReference type="SUPFAM" id="SSF50978">
    <property type="entry name" value="WD40 repeat-like"/>
    <property type="match status" value="1"/>
</dbReference>
<dbReference type="PROSITE" id="PS50082">
    <property type="entry name" value="WD_REPEATS_2"/>
    <property type="match status" value="1"/>
</dbReference>
<dbReference type="PROSITE" id="PS50294">
    <property type="entry name" value="WD_REPEATS_REGION"/>
    <property type="match status" value="1"/>
</dbReference>
<protein>
    <recommendedName>
        <fullName>Dynein axonemal intermediate chain 1</fullName>
    </recommendedName>
    <alternativeName>
        <fullName>Axonemal dynein intermediate chain 1</fullName>
    </alternativeName>
</protein>
<evidence type="ECO:0000250" key="1"/>
<evidence type="ECO:0000250" key="2">
    <source>
        <dbReference type="UniProtKB" id="Q8C0M8"/>
    </source>
</evidence>
<evidence type="ECO:0000250" key="3">
    <source>
        <dbReference type="UniProtKB" id="Q9UI46"/>
    </source>
</evidence>
<evidence type="ECO:0000256" key="4">
    <source>
        <dbReference type="SAM" id="MobiDB-lite"/>
    </source>
</evidence>
<evidence type="ECO:0000305" key="5"/>
<evidence type="ECO:0007744" key="6">
    <source>
    </source>
</evidence>
<accession>Q5XIL8</accession>
<feature type="chain" id="PRO_0000254656" description="Dynein axonemal intermediate chain 1">
    <location>
        <begin position="1"/>
        <end position="705"/>
    </location>
</feature>
<feature type="repeat" description="WD 1">
    <location>
        <begin position="386"/>
        <end position="426"/>
    </location>
</feature>
<feature type="repeat" description="WD 2">
    <location>
        <begin position="435"/>
        <end position="478"/>
    </location>
</feature>
<feature type="repeat" description="WD 3">
    <location>
        <begin position="543"/>
        <end position="583"/>
    </location>
</feature>
<feature type="repeat" description="WD 4">
    <location>
        <begin position="585"/>
        <end position="625"/>
    </location>
</feature>
<feature type="repeat" description="WD 5">
    <location>
        <begin position="633"/>
        <end position="672"/>
    </location>
</feature>
<feature type="region of interest" description="Disordered" evidence="4">
    <location>
        <begin position="1"/>
        <end position="44"/>
    </location>
</feature>
<feature type="region of interest" description="Disordered" evidence="4">
    <location>
        <begin position="122"/>
        <end position="169"/>
    </location>
</feature>
<feature type="compositionally biased region" description="Polar residues" evidence="4">
    <location>
        <begin position="124"/>
        <end position="135"/>
    </location>
</feature>
<feature type="compositionally biased region" description="Acidic residues" evidence="4">
    <location>
        <begin position="136"/>
        <end position="159"/>
    </location>
</feature>
<feature type="modified residue" description="Phosphoserine" evidence="6">
    <location>
        <position position="124"/>
    </location>
</feature>
<feature type="modified residue" description="Phosphoserine" evidence="6">
    <location>
        <position position="127"/>
    </location>
</feature>
<comment type="function">
    <text evidence="1">Part of the dynein complex of respiratory cilia.</text>
</comment>
<comment type="subunit">
    <text evidence="2 3">Consists of at least two heavy chains and a number of intermediate and light chains. Interacts with BICD2 (By similarity). Interacts with CFAP45 and CFAP52 (By similarity). Interacts with CFAP53 (By similarity).</text>
</comment>
<comment type="subcellular location">
    <subcellularLocation>
        <location evidence="3">Cytoplasm</location>
        <location evidence="3">Cytoskeleton</location>
        <location evidence="3">Cilium axoneme</location>
    </subcellularLocation>
</comment>
<comment type="similarity">
    <text evidence="5">Belongs to the dynein intermediate chain family.</text>
</comment>
<sequence>MPSKQIRKQSVILTRGARKREEDSGTDVGEGADDWAQSKAAVRPPDQLELTDAELKEEFTRILTANNPHAPQNIVRYSFKERTYKLIGFVNQMAIHFSQVGNLIPKDSDEGRRQHYRDELVAGSQESVKVVTSDTEILEEEEEPKEGEGEGEGEAEGEAEAGSQTDVPAAAETTEKVIEEELMAPVQPKERKLTNQFNFSERASQTFNNPLRDRECQMEPPPRTNFSATANQWEIYDAYVDELEKLEKTKEKEKTKTPVAKKTEKMAMRKLTSMESQSDDITKVTQAAKIVERMVNQNTYDDVAQDFKYYEDAADEYRDQEGTLLPLWKFQNDKAKRLAVTALCWNPKYKDLFAVGHGSYDFMKQSRGMLLLYSMKNPSFPEYMFSSESGIMCLDMHMDHPYLVVVGYYDGNVAIYNLKKPHSQPCFRSTSKSGKHTDPVWQVKWQKDDMDHNLNFFSVSSDGRIVSWTLVKSELVHIDVIKLKDEGSTTEIPEGLQLHTVGCGTAFDFHKEIDYLFLVGTEEGKIYKCSKSYSSQFLDTYDAHNMAVDAVLWNPYHARVFISCSSDWTVKIWDHAIKTPMFIYDLNAAVGDVAWAPYSSTVFAAVTTDGKAHVFDLAVNKYEAICNQPVVAKKKNKITHVQFNPIHPIIIVGDDRGHITCLKLSPNLRKMPKEKKGQEVQKGPAVEIAKLDKLLNLVREVKTKT</sequence>
<name>DNAI1_RAT</name>
<reference key="1">
    <citation type="journal article" date="2004" name="Genome Res.">
        <title>The status, quality, and expansion of the NIH full-length cDNA project: the Mammalian Gene Collection (MGC).</title>
        <authorList>
            <consortium name="The MGC Project Team"/>
        </authorList>
    </citation>
    <scope>NUCLEOTIDE SEQUENCE [LARGE SCALE MRNA]</scope>
    <source>
        <tissue>Testis</tissue>
    </source>
</reference>
<reference key="2">
    <citation type="journal article" date="2012" name="Nat. Commun.">
        <title>Quantitative maps of protein phosphorylation sites across 14 different rat organs and tissues.</title>
        <authorList>
            <person name="Lundby A."/>
            <person name="Secher A."/>
            <person name="Lage K."/>
            <person name="Nordsborg N.B."/>
            <person name="Dmytriyev A."/>
            <person name="Lundby C."/>
            <person name="Olsen J.V."/>
        </authorList>
    </citation>
    <scope>PHOSPHORYLATION [LARGE SCALE ANALYSIS] AT SER-124 AND SER-127</scope>
    <scope>IDENTIFICATION BY MASS SPECTROMETRY [LARGE SCALE ANALYSIS]</scope>
</reference>
<organism>
    <name type="scientific">Rattus norvegicus</name>
    <name type="common">Rat</name>
    <dbReference type="NCBI Taxonomy" id="10116"/>
    <lineage>
        <taxon>Eukaryota</taxon>
        <taxon>Metazoa</taxon>
        <taxon>Chordata</taxon>
        <taxon>Craniata</taxon>
        <taxon>Vertebrata</taxon>
        <taxon>Euteleostomi</taxon>
        <taxon>Mammalia</taxon>
        <taxon>Eutheria</taxon>
        <taxon>Euarchontoglires</taxon>
        <taxon>Glires</taxon>
        <taxon>Rodentia</taxon>
        <taxon>Myomorpha</taxon>
        <taxon>Muroidea</taxon>
        <taxon>Muridae</taxon>
        <taxon>Murinae</taxon>
        <taxon>Rattus</taxon>
    </lineage>
</organism>